<keyword id="KW-0067">ATP-binding</keyword>
<keyword id="KW-0997">Cell inner membrane</keyword>
<keyword id="KW-1003">Cell membrane</keyword>
<keyword id="KW-0963">Cytoplasm</keyword>
<keyword id="KW-0472">Membrane</keyword>
<keyword id="KW-0479">Metal-binding</keyword>
<keyword id="KW-0547">Nucleotide-binding</keyword>
<keyword id="KW-0653">Protein transport</keyword>
<keyword id="KW-1185">Reference proteome</keyword>
<keyword id="KW-1278">Translocase</keyword>
<keyword id="KW-0811">Translocation</keyword>
<keyword id="KW-0813">Transport</keyword>
<keyword id="KW-0862">Zinc</keyword>
<organism>
    <name type="scientific">Helicobacter pylori (strain G27)</name>
    <dbReference type="NCBI Taxonomy" id="563041"/>
    <lineage>
        <taxon>Bacteria</taxon>
        <taxon>Pseudomonadati</taxon>
        <taxon>Campylobacterota</taxon>
        <taxon>Epsilonproteobacteria</taxon>
        <taxon>Campylobacterales</taxon>
        <taxon>Helicobacteraceae</taxon>
        <taxon>Helicobacter</taxon>
    </lineage>
</organism>
<dbReference type="EC" id="7.4.2.8" evidence="1"/>
<dbReference type="EMBL" id="CP001173">
    <property type="protein sequence ID" value="ACI27497.1"/>
    <property type="molecule type" value="Genomic_DNA"/>
</dbReference>
<dbReference type="RefSeq" id="WP_000588130.1">
    <property type="nucleotide sequence ID" value="NC_011333.1"/>
</dbReference>
<dbReference type="SMR" id="B5Z7E8"/>
<dbReference type="KEGG" id="hpg:HPG27_742"/>
<dbReference type="HOGENOM" id="CLU_005314_3_0_7"/>
<dbReference type="Proteomes" id="UP000001735">
    <property type="component" value="Chromosome"/>
</dbReference>
<dbReference type="GO" id="GO:0031522">
    <property type="term" value="C:cell envelope Sec protein transport complex"/>
    <property type="evidence" value="ECO:0007669"/>
    <property type="project" value="TreeGrafter"/>
</dbReference>
<dbReference type="GO" id="GO:0005829">
    <property type="term" value="C:cytosol"/>
    <property type="evidence" value="ECO:0007669"/>
    <property type="project" value="TreeGrafter"/>
</dbReference>
<dbReference type="GO" id="GO:0005886">
    <property type="term" value="C:plasma membrane"/>
    <property type="evidence" value="ECO:0007669"/>
    <property type="project" value="UniProtKB-SubCell"/>
</dbReference>
<dbReference type="GO" id="GO:0005524">
    <property type="term" value="F:ATP binding"/>
    <property type="evidence" value="ECO:0007669"/>
    <property type="project" value="UniProtKB-UniRule"/>
</dbReference>
<dbReference type="GO" id="GO:0046872">
    <property type="term" value="F:metal ion binding"/>
    <property type="evidence" value="ECO:0007669"/>
    <property type="project" value="UniProtKB-KW"/>
</dbReference>
<dbReference type="GO" id="GO:0008564">
    <property type="term" value="F:protein-exporting ATPase activity"/>
    <property type="evidence" value="ECO:0007669"/>
    <property type="project" value="UniProtKB-EC"/>
</dbReference>
<dbReference type="GO" id="GO:0065002">
    <property type="term" value="P:intracellular protein transmembrane transport"/>
    <property type="evidence" value="ECO:0007669"/>
    <property type="project" value="UniProtKB-UniRule"/>
</dbReference>
<dbReference type="GO" id="GO:0017038">
    <property type="term" value="P:protein import"/>
    <property type="evidence" value="ECO:0007669"/>
    <property type="project" value="InterPro"/>
</dbReference>
<dbReference type="GO" id="GO:0006605">
    <property type="term" value="P:protein targeting"/>
    <property type="evidence" value="ECO:0007669"/>
    <property type="project" value="UniProtKB-UniRule"/>
</dbReference>
<dbReference type="GO" id="GO:0043952">
    <property type="term" value="P:protein transport by the Sec complex"/>
    <property type="evidence" value="ECO:0007669"/>
    <property type="project" value="TreeGrafter"/>
</dbReference>
<dbReference type="CDD" id="cd17928">
    <property type="entry name" value="DEXDc_SecA"/>
    <property type="match status" value="1"/>
</dbReference>
<dbReference type="CDD" id="cd18803">
    <property type="entry name" value="SF2_C_secA"/>
    <property type="match status" value="1"/>
</dbReference>
<dbReference type="FunFam" id="3.40.50.300:FF:000429">
    <property type="entry name" value="Preprotein translocase subunit SecA"/>
    <property type="match status" value="1"/>
</dbReference>
<dbReference type="FunFam" id="3.90.1440.10:FF:000001">
    <property type="entry name" value="Preprotein translocase subunit SecA"/>
    <property type="match status" value="1"/>
</dbReference>
<dbReference type="FunFam" id="1.10.3060.10:FF:000012">
    <property type="entry name" value="Protein translocase subunit SecA"/>
    <property type="match status" value="1"/>
</dbReference>
<dbReference type="Gene3D" id="1.10.3060.10">
    <property type="entry name" value="Helical scaffold and wing domains of SecA"/>
    <property type="match status" value="1"/>
</dbReference>
<dbReference type="Gene3D" id="3.40.50.300">
    <property type="entry name" value="P-loop containing nucleotide triphosphate hydrolases"/>
    <property type="match status" value="3"/>
</dbReference>
<dbReference type="Gene3D" id="3.90.1440.10">
    <property type="entry name" value="SecA, preprotein cross-linking domain"/>
    <property type="match status" value="1"/>
</dbReference>
<dbReference type="HAMAP" id="MF_01382">
    <property type="entry name" value="SecA"/>
    <property type="match status" value="1"/>
</dbReference>
<dbReference type="InterPro" id="IPR014001">
    <property type="entry name" value="Helicase_ATP-bd"/>
</dbReference>
<dbReference type="InterPro" id="IPR001650">
    <property type="entry name" value="Helicase_C-like"/>
</dbReference>
<dbReference type="InterPro" id="IPR027417">
    <property type="entry name" value="P-loop_NTPase"/>
</dbReference>
<dbReference type="InterPro" id="IPR004027">
    <property type="entry name" value="SEC_C_motif"/>
</dbReference>
<dbReference type="InterPro" id="IPR000185">
    <property type="entry name" value="SecA"/>
</dbReference>
<dbReference type="InterPro" id="IPR020937">
    <property type="entry name" value="SecA_CS"/>
</dbReference>
<dbReference type="InterPro" id="IPR011115">
    <property type="entry name" value="SecA_DEAD"/>
</dbReference>
<dbReference type="InterPro" id="IPR014018">
    <property type="entry name" value="SecA_motor_DEAD"/>
</dbReference>
<dbReference type="InterPro" id="IPR011130">
    <property type="entry name" value="SecA_preprotein_X-link_dom"/>
</dbReference>
<dbReference type="InterPro" id="IPR044722">
    <property type="entry name" value="SecA_SF2_C"/>
</dbReference>
<dbReference type="InterPro" id="IPR011116">
    <property type="entry name" value="SecA_Wing/Scaffold"/>
</dbReference>
<dbReference type="InterPro" id="IPR036266">
    <property type="entry name" value="SecA_Wing/Scaffold_sf"/>
</dbReference>
<dbReference type="InterPro" id="IPR036670">
    <property type="entry name" value="SecA_X-link_sf"/>
</dbReference>
<dbReference type="NCBIfam" id="NF006630">
    <property type="entry name" value="PRK09200.1"/>
    <property type="match status" value="1"/>
</dbReference>
<dbReference type="NCBIfam" id="TIGR00963">
    <property type="entry name" value="secA"/>
    <property type="match status" value="1"/>
</dbReference>
<dbReference type="PANTHER" id="PTHR30612:SF0">
    <property type="entry name" value="CHLOROPLAST PROTEIN-TRANSPORTING ATPASE"/>
    <property type="match status" value="1"/>
</dbReference>
<dbReference type="PANTHER" id="PTHR30612">
    <property type="entry name" value="SECA INNER MEMBRANE COMPONENT OF SEC PROTEIN SECRETION SYSTEM"/>
    <property type="match status" value="1"/>
</dbReference>
<dbReference type="Pfam" id="PF21090">
    <property type="entry name" value="P-loop_SecA"/>
    <property type="match status" value="1"/>
</dbReference>
<dbReference type="Pfam" id="PF02810">
    <property type="entry name" value="SEC-C"/>
    <property type="match status" value="1"/>
</dbReference>
<dbReference type="Pfam" id="PF07517">
    <property type="entry name" value="SecA_DEAD"/>
    <property type="match status" value="1"/>
</dbReference>
<dbReference type="Pfam" id="PF01043">
    <property type="entry name" value="SecA_PP_bind"/>
    <property type="match status" value="1"/>
</dbReference>
<dbReference type="Pfam" id="PF07516">
    <property type="entry name" value="SecA_SW"/>
    <property type="match status" value="1"/>
</dbReference>
<dbReference type="PRINTS" id="PR00906">
    <property type="entry name" value="SECA"/>
</dbReference>
<dbReference type="SMART" id="SM00957">
    <property type="entry name" value="SecA_DEAD"/>
    <property type="match status" value="1"/>
</dbReference>
<dbReference type="SMART" id="SM00958">
    <property type="entry name" value="SecA_PP_bind"/>
    <property type="match status" value="1"/>
</dbReference>
<dbReference type="SUPFAM" id="SSF81886">
    <property type="entry name" value="Helical scaffold and wing domains of SecA"/>
    <property type="match status" value="1"/>
</dbReference>
<dbReference type="SUPFAM" id="SSF52540">
    <property type="entry name" value="P-loop containing nucleoside triphosphate hydrolases"/>
    <property type="match status" value="2"/>
</dbReference>
<dbReference type="SUPFAM" id="SSF81767">
    <property type="entry name" value="Pre-protein crosslinking domain of SecA"/>
    <property type="match status" value="1"/>
</dbReference>
<dbReference type="PROSITE" id="PS01312">
    <property type="entry name" value="SECA"/>
    <property type="match status" value="1"/>
</dbReference>
<dbReference type="PROSITE" id="PS51196">
    <property type="entry name" value="SECA_MOTOR_DEAD"/>
    <property type="match status" value="1"/>
</dbReference>
<sequence>MIKAIIGKIIGTRNDRWIKQYKKQVLAINALEPAYEKMSDDELQNAFEELKKRVRSTEKDLQEKTLLEVLPESFAITREASKRILKMRHFDVQLIGGMVLNDGKIAEMKTGEGKTLVATLAVALNALKGESVYVVTVNDYLAHRDSKEMEPLYQFLGYSVGTITASVRDDDERLEIYSKDIVYGTNNEFGFDYLRDNMKYSLEHKVQKSHAFAIVDEVDSILIDEARTPLIISGPVDRRMENYNKADEVAKSMQVETDFTIDEKNRAILITEEGIKKAENLFGVDNLYKIENAALSHHLDQALKANYLFFIDKDYIVANNEVVIVDEFTGRLSEGRRFSEGLHQALEAKEGVSIKEESQTLADITFQNYFRMFSKLSGMTGTAQTEATEFLEIYNLEVVSIPTNLAIKRKDLNDLIYKSEKEKFDAVILKIKELHDKGQPVLVGTASIEKSETLHALLKKERIPHTVLNAKQHTKEAEIIKDAGLKGAVTIATNMAGRGVDIKLTDEIKELGGLYIIGTERHESRRIDNQLRGRSGRQGDPGTSQFYLSLEDNLLRIFGSDRIKGVMEKLGLKDGEHIESKLVTRAVENAQKKVENLHFESRKHLLEYDDVANEQRKSVYKFRDELLDVNYDISAKIAENREYALNQIFSKLKAFDHQNLSEEELLGLKNVLKEDFNAHVSLEDLKKATPIEKFVAEKLKSDYENKMKVLDSEQRSRIERIVYLQILDNAWREHLYTMDNLKTGINLRGYNQKDPLVEYKKESYNLFLEFIEDIKMEAIKTFSKIQFENEQDSSDAERYLDNFSEEREHESVTYRHEETLDEDLNVAMKAFSKTPKRNEPCPCQSGKKYKDCCAKSGPKKGLFAK</sequence>
<proteinExistence type="inferred from homology"/>
<evidence type="ECO:0000255" key="1">
    <source>
        <dbReference type="HAMAP-Rule" id="MF_01382"/>
    </source>
</evidence>
<reference key="1">
    <citation type="journal article" date="2009" name="J. Bacteriol.">
        <title>The complete genome sequence of Helicobacter pylori strain G27.</title>
        <authorList>
            <person name="Baltrus D.A."/>
            <person name="Amieva M.R."/>
            <person name="Covacci A."/>
            <person name="Lowe T.M."/>
            <person name="Merrell D.S."/>
            <person name="Ottemann K.M."/>
            <person name="Stein M."/>
            <person name="Salama N.R."/>
            <person name="Guillemin K."/>
        </authorList>
    </citation>
    <scope>NUCLEOTIDE SEQUENCE [LARGE SCALE GENOMIC DNA]</scope>
    <source>
        <strain>G27</strain>
    </source>
</reference>
<protein>
    <recommendedName>
        <fullName evidence="1">Protein translocase subunit SecA</fullName>
        <ecNumber evidence="1">7.4.2.8</ecNumber>
    </recommendedName>
</protein>
<accession>B5Z7E8</accession>
<comment type="function">
    <text evidence="1">Part of the Sec protein translocase complex. Interacts with the SecYEG preprotein conducting channel. Has a central role in coupling the hydrolysis of ATP to the transfer of proteins into and across the cell membrane, serving as an ATP-driven molecular motor driving the stepwise translocation of polypeptide chains across the membrane.</text>
</comment>
<comment type="catalytic activity">
    <reaction evidence="1">
        <text>ATP + H2O + cellular proteinSide 1 = ADP + phosphate + cellular proteinSide 2.</text>
        <dbReference type="EC" id="7.4.2.8"/>
    </reaction>
</comment>
<comment type="cofactor">
    <cofactor evidence="1">
        <name>Zn(2+)</name>
        <dbReference type="ChEBI" id="CHEBI:29105"/>
    </cofactor>
    <text evidence="1">May bind 1 zinc ion per subunit.</text>
</comment>
<comment type="subunit">
    <text evidence="1">Monomer and homodimer. Part of the essential Sec protein translocation apparatus which comprises SecA, SecYEG and auxiliary proteins SecDF-YajC and YidC.</text>
</comment>
<comment type="subcellular location">
    <subcellularLocation>
        <location evidence="1">Cell inner membrane</location>
        <topology evidence="1">Peripheral membrane protein</topology>
        <orientation evidence="1">Cytoplasmic side</orientation>
    </subcellularLocation>
    <subcellularLocation>
        <location evidence="1">Cytoplasm</location>
    </subcellularLocation>
    <text evidence="1">Distribution is 50-50.</text>
</comment>
<comment type="similarity">
    <text evidence="1">Belongs to the SecA family.</text>
</comment>
<feature type="chain" id="PRO_1000145022" description="Protein translocase subunit SecA">
    <location>
        <begin position="1"/>
        <end position="865"/>
    </location>
</feature>
<feature type="binding site" evidence="1">
    <location>
        <position position="93"/>
    </location>
    <ligand>
        <name>ATP</name>
        <dbReference type="ChEBI" id="CHEBI:30616"/>
    </ligand>
</feature>
<feature type="binding site" evidence="1">
    <location>
        <begin position="111"/>
        <end position="115"/>
    </location>
    <ligand>
        <name>ATP</name>
        <dbReference type="ChEBI" id="CHEBI:30616"/>
    </ligand>
</feature>
<feature type="binding site" evidence="1">
    <location>
        <position position="501"/>
    </location>
    <ligand>
        <name>ATP</name>
        <dbReference type="ChEBI" id="CHEBI:30616"/>
    </ligand>
</feature>
<feature type="binding site" evidence="1">
    <location>
        <position position="841"/>
    </location>
    <ligand>
        <name>Zn(2+)</name>
        <dbReference type="ChEBI" id="CHEBI:29105"/>
    </ligand>
</feature>
<feature type="binding site" evidence="1">
    <location>
        <position position="843"/>
    </location>
    <ligand>
        <name>Zn(2+)</name>
        <dbReference type="ChEBI" id="CHEBI:29105"/>
    </ligand>
</feature>
<feature type="binding site" evidence="1">
    <location>
        <position position="852"/>
    </location>
    <ligand>
        <name>Zn(2+)</name>
        <dbReference type="ChEBI" id="CHEBI:29105"/>
    </ligand>
</feature>
<feature type="binding site" evidence="1">
    <location>
        <position position="853"/>
    </location>
    <ligand>
        <name>Zn(2+)</name>
        <dbReference type="ChEBI" id="CHEBI:29105"/>
    </ligand>
</feature>
<name>SECA_HELPG</name>
<gene>
    <name evidence="1" type="primary">secA</name>
    <name type="ordered locus">HPG27_742</name>
</gene>